<accession>Q99335</accession>
<dbReference type="EMBL" id="M38370">
    <property type="protein sequence ID" value="AAA98140.1"/>
    <property type="molecule type" value="Genomic_DNA"/>
</dbReference>
<dbReference type="PIR" id="A37801">
    <property type="entry name" value="A37801"/>
</dbReference>
<dbReference type="SMR" id="Q99335"/>
<dbReference type="GO" id="GO:0003677">
    <property type="term" value="F:DNA binding"/>
    <property type="evidence" value="ECO:0007669"/>
    <property type="project" value="UniProtKB-KW"/>
</dbReference>
<dbReference type="GO" id="GO:0015074">
    <property type="term" value="P:DNA integration"/>
    <property type="evidence" value="ECO:0007669"/>
    <property type="project" value="InterPro"/>
</dbReference>
<dbReference type="GO" id="GO:0006310">
    <property type="term" value="P:DNA recombination"/>
    <property type="evidence" value="ECO:0007669"/>
    <property type="project" value="UniProtKB-KW"/>
</dbReference>
<dbReference type="GO" id="GO:0032196">
    <property type="term" value="P:transposition"/>
    <property type="evidence" value="ECO:0007669"/>
    <property type="project" value="UniProtKB-KW"/>
</dbReference>
<dbReference type="Gene3D" id="3.30.420.10">
    <property type="entry name" value="Ribonuclease H-like superfamily/Ribonuclease H"/>
    <property type="match status" value="1"/>
</dbReference>
<dbReference type="InterPro" id="IPR017894">
    <property type="entry name" value="HTH_IS21_transposase_type"/>
</dbReference>
<dbReference type="InterPro" id="IPR001584">
    <property type="entry name" value="Integrase_cat-core"/>
</dbReference>
<dbReference type="InterPro" id="IPR054353">
    <property type="entry name" value="IstA-like_C"/>
</dbReference>
<dbReference type="InterPro" id="IPR012337">
    <property type="entry name" value="RNaseH-like_sf"/>
</dbReference>
<dbReference type="InterPro" id="IPR036397">
    <property type="entry name" value="RNaseH_sf"/>
</dbReference>
<dbReference type="NCBIfam" id="NF033546">
    <property type="entry name" value="transpos_IS21"/>
    <property type="match status" value="1"/>
</dbReference>
<dbReference type="PANTHER" id="PTHR35004:SF7">
    <property type="entry name" value="INTEGRASE PROTEIN"/>
    <property type="match status" value="1"/>
</dbReference>
<dbReference type="PANTHER" id="PTHR35004">
    <property type="entry name" value="TRANSPOSASE RV3428C-RELATED"/>
    <property type="match status" value="1"/>
</dbReference>
<dbReference type="Pfam" id="PF22483">
    <property type="entry name" value="Mu-transpos_C_2"/>
    <property type="match status" value="1"/>
</dbReference>
<dbReference type="Pfam" id="PF00665">
    <property type="entry name" value="rve"/>
    <property type="match status" value="1"/>
</dbReference>
<dbReference type="SUPFAM" id="SSF53098">
    <property type="entry name" value="Ribonuclease H-like"/>
    <property type="match status" value="1"/>
</dbReference>
<dbReference type="PROSITE" id="PS50531">
    <property type="entry name" value="HTH_IS21"/>
    <property type="match status" value="1"/>
</dbReference>
<dbReference type="PROSITE" id="PS50994">
    <property type="entry name" value="INTEGRASE"/>
    <property type="match status" value="1"/>
</dbReference>
<keyword id="KW-0233">DNA recombination</keyword>
<keyword id="KW-0238">DNA-binding</keyword>
<keyword id="KW-0814">Transposable element</keyword>
<keyword id="KW-0815">Transposition</keyword>
<organism>
    <name type="scientific">Bacillus thuringiensis subsp. berliner</name>
    <dbReference type="NCBI Taxonomy" id="1434"/>
    <lineage>
        <taxon>Bacteria</taxon>
        <taxon>Bacillati</taxon>
        <taxon>Bacillota</taxon>
        <taxon>Bacilli</taxon>
        <taxon>Bacillales</taxon>
        <taxon>Bacillaceae</taxon>
        <taxon>Bacillus</taxon>
        <taxon>Bacillus cereus group</taxon>
    </lineage>
</organism>
<sequence>MYIKLDIQTEFEVKSLSDLPNFKKLMGNLKMKINKSQLARELNVDRRTIDKYLNGFTPKGTKNKTSKIDTYYEVIAALLSSDSKQIFYYKRVLWQYLTDNHGLKCSQSAFRAYINRKPEFRTYFDEGKRILSGHSVGVRYETPPGEQAQLDWKESIRFETKSGEIVYVNVAVLLLSYSRFKVFHLNISKSQSVLMSFMTEAFEMFGGVPKVIVTDNMKTVMDEARTEHFTGTINNKFAQFAQDFGFKVQPCIAGRPNTKGKVEAPMKLLDEIHTYQGRFTFEELHEFVQKLCARINQTFHQGTGKIPVFALKQEKNLLQPLPKSAIRDSYMIKHKLVKVNTSGMISYKSNQYSVPAEYQGKTVGLQVYDNQIYVYHNMKLIVQHKISQSKLNYKEEHYKKALAKSLPKYPNIDNLAKQNLSVIGEVYRNEE</sequence>
<reference key="1">
    <citation type="journal article" date="1990" name="J. Bacteriol.">
        <title>Structural and genetic organization of IS232, a new insertion sequence of Bacillus thuringiensis.</title>
        <authorList>
            <person name="Menou G."/>
            <person name="Mahillon J."/>
            <person name="Lecadet M.-M."/>
            <person name="Lereclus D."/>
        </authorList>
    </citation>
    <scope>NUCLEOTIDE SEQUENCE [GENOMIC DNA]</scope>
    <source>
        <strain>1715</strain>
    </source>
</reference>
<feature type="chain" id="PRO_0000075465" description="Transposase for insertion sequence element IS232">
    <location>
        <begin position="1"/>
        <end position="431"/>
    </location>
</feature>
<feature type="domain" description="HTH IS21-type" evidence="2">
    <location>
        <begin position="20"/>
        <end position="79"/>
    </location>
</feature>
<feature type="domain" description="Integrase catalytic" evidence="1">
    <location>
        <begin position="140"/>
        <end position="315"/>
    </location>
</feature>
<feature type="DNA-binding region" description="H-T-H motif" evidence="2">
    <location>
        <begin position="35"/>
        <end position="54"/>
    </location>
</feature>
<proteinExistence type="inferred from homology"/>
<comment type="function">
    <text>Involved in the transposition of the insertion sequence.</text>
</comment>
<comment type="similarity">
    <text evidence="3">Belongs to the transposase IS21/IS408/IS1162 family.</text>
</comment>
<name>T232_BACTB</name>
<evidence type="ECO:0000255" key="1">
    <source>
        <dbReference type="PROSITE-ProRule" id="PRU00457"/>
    </source>
</evidence>
<evidence type="ECO:0000255" key="2">
    <source>
        <dbReference type="PROSITE-ProRule" id="PRU00615"/>
    </source>
</evidence>
<evidence type="ECO:0000305" key="3"/>
<protein>
    <recommendedName>
        <fullName>Transposase for insertion sequence element IS232</fullName>
    </recommendedName>
</protein>